<reference key="1">
    <citation type="journal article" date="2007" name="J. Bacteriol.">
        <title>Complete genome sequence of Haemophilus somnus (Histophilus somni) strain 129Pt and comparison to Haemophilus ducreyi 35000HP and Haemophilus influenzae Rd.</title>
        <authorList>
            <person name="Challacombe J.F."/>
            <person name="Duncan A.J."/>
            <person name="Brettin T.S."/>
            <person name="Bruce D."/>
            <person name="Chertkov O."/>
            <person name="Detter J.C."/>
            <person name="Han C.S."/>
            <person name="Misra M."/>
            <person name="Richardson P."/>
            <person name="Tapia R."/>
            <person name="Thayer N."/>
            <person name="Xie G."/>
            <person name="Inzana T.J."/>
        </authorList>
    </citation>
    <scope>NUCLEOTIDE SEQUENCE [LARGE SCALE GENOMIC DNA]</scope>
    <source>
        <strain>129Pt</strain>
    </source>
</reference>
<sequence>MPAQIISGTELSKNIKFNVAEKIQHYLQQGKRAPGLAVILVGADPASQVYVGSKRRSCEELGIYSKSYDLPAETTEQELLTLIEQLNQDPQIDGILVQLPLPKKINSTKVIEHISPTKDIDGFHPYNVGRLCQRIPTLRACTPLGIMKLLETTGVDLYGQHAVIVGASNIVGRPMALELLLAGCTVTVTHRFTKDLKSHVHQADILVVAVGKPHIIPGEWIKEGAIVIDVGINRVDGKLVGDVQYDEASKKASFITPVPGGVGPMTVAMLMFNTLLAYESHS</sequence>
<evidence type="ECO:0000255" key="1">
    <source>
        <dbReference type="HAMAP-Rule" id="MF_01576"/>
    </source>
</evidence>
<comment type="function">
    <text evidence="1">Catalyzes the oxidation of 5,10-methylenetetrahydrofolate to 5,10-methenyltetrahydrofolate and then the hydrolysis of 5,10-methenyltetrahydrofolate to 10-formyltetrahydrofolate.</text>
</comment>
<comment type="catalytic activity">
    <reaction evidence="1">
        <text>(6R)-5,10-methylene-5,6,7,8-tetrahydrofolate + NADP(+) = (6R)-5,10-methenyltetrahydrofolate + NADPH</text>
        <dbReference type="Rhea" id="RHEA:22812"/>
        <dbReference type="ChEBI" id="CHEBI:15636"/>
        <dbReference type="ChEBI" id="CHEBI:57455"/>
        <dbReference type="ChEBI" id="CHEBI:57783"/>
        <dbReference type="ChEBI" id="CHEBI:58349"/>
        <dbReference type="EC" id="1.5.1.5"/>
    </reaction>
</comment>
<comment type="catalytic activity">
    <reaction evidence="1">
        <text>(6R)-5,10-methenyltetrahydrofolate + H2O = (6R)-10-formyltetrahydrofolate + H(+)</text>
        <dbReference type="Rhea" id="RHEA:23700"/>
        <dbReference type="ChEBI" id="CHEBI:15377"/>
        <dbReference type="ChEBI" id="CHEBI:15378"/>
        <dbReference type="ChEBI" id="CHEBI:57455"/>
        <dbReference type="ChEBI" id="CHEBI:195366"/>
        <dbReference type="EC" id="3.5.4.9"/>
    </reaction>
</comment>
<comment type="pathway">
    <text evidence="1">One-carbon metabolism; tetrahydrofolate interconversion.</text>
</comment>
<comment type="subunit">
    <text evidence="1">Homodimer.</text>
</comment>
<comment type="similarity">
    <text evidence="1">Belongs to the tetrahydrofolate dehydrogenase/cyclohydrolase family.</text>
</comment>
<proteinExistence type="inferred from homology"/>
<protein>
    <recommendedName>
        <fullName evidence="1">Bifunctional protein FolD</fullName>
    </recommendedName>
    <domain>
        <recommendedName>
            <fullName evidence="1">Methylenetetrahydrofolate dehydrogenase</fullName>
            <ecNumber evidence="1">1.5.1.5</ecNumber>
        </recommendedName>
    </domain>
    <domain>
        <recommendedName>
            <fullName evidence="1">Methenyltetrahydrofolate cyclohydrolase</fullName>
            <ecNumber evidence="1">3.5.4.9</ecNumber>
        </recommendedName>
    </domain>
</protein>
<name>FOLD_HISS1</name>
<feature type="chain" id="PRO_0000268366" description="Bifunctional protein FolD">
    <location>
        <begin position="1"/>
        <end position="282"/>
    </location>
</feature>
<feature type="binding site" evidence="1">
    <location>
        <begin position="166"/>
        <end position="168"/>
    </location>
    <ligand>
        <name>NADP(+)</name>
        <dbReference type="ChEBI" id="CHEBI:58349"/>
    </ligand>
</feature>
<feature type="binding site" evidence="1">
    <location>
        <position position="232"/>
    </location>
    <ligand>
        <name>NADP(+)</name>
        <dbReference type="ChEBI" id="CHEBI:58349"/>
    </ligand>
</feature>
<accession>Q0I3S5</accession>
<dbReference type="EC" id="1.5.1.5" evidence="1"/>
<dbReference type="EC" id="3.5.4.9" evidence="1"/>
<dbReference type="EMBL" id="CP000436">
    <property type="protein sequence ID" value="ABI25496.1"/>
    <property type="molecule type" value="Genomic_DNA"/>
</dbReference>
<dbReference type="SMR" id="Q0I3S5"/>
<dbReference type="KEGG" id="hso:HS_1221"/>
<dbReference type="eggNOG" id="COG0190">
    <property type="taxonomic scope" value="Bacteria"/>
</dbReference>
<dbReference type="HOGENOM" id="CLU_034045_1_2_6"/>
<dbReference type="UniPathway" id="UPA00193"/>
<dbReference type="GO" id="GO:0005829">
    <property type="term" value="C:cytosol"/>
    <property type="evidence" value="ECO:0007669"/>
    <property type="project" value="TreeGrafter"/>
</dbReference>
<dbReference type="GO" id="GO:0004477">
    <property type="term" value="F:methenyltetrahydrofolate cyclohydrolase activity"/>
    <property type="evidence" value="ECO:0007669"/>
    <property type="project" value="UniProtKB-UniRule"/>
</dbReference>
<dbReference type="GO" id="GO:0004488">
    <property type="term" value="F:methylenetetrahydrofolate dehydrogenase (NADP+) activity"/>
    <property type="evidence" value="ECO:0007669"/>
    <property type="project" value="UniProtKB-UniRule"/>
</dbReference>
<dbReference type="GO" id="GO:0000105">
    <property type="term" value="P:L-histidine biosynthetic process"/>
    <property type="evidence" value="ECO:0007669"/>
    <property type="project" value="UniProtKB-KW"/>
</dbReference>
<dbReference type="GO" id="GO:0009086">
    <property type="term" value="P:methionine biosynthetic process"/>
    <property type="evidence" value="ECO:0007669"/>
    <property type="project" value="UniProtKB-KW"/>
</dbReference>
<dbReference type="GO" id="GO:0006164">
    <property type="term" value="P:purine nucleotide biosynthetic process"/>
    <property type="evidence" value="ECO:0007669"/>
    <property type="project" value="UniProtKB-KW"/>
</dbReference>
<dbReference type="GO" id="GO:0035999">
    <property type="term" value="P:tetrahydrofolate interconversion"/>
    <property type="evidence" value="ECO:0007669"/>
    <property type="project" value="UniProtKB-UniRule"/>
</dbReference>
<dbReference type="CDD" id="cd01080">
    <property type="entry name" value="NAD_bind_m-THF_DH_Cyclohyd"/>
    <property type="match status" value="1"/>
</dbReference>
<dbReference type="FunFam" id="3.40.50.10860:FF:000001">
    <property type="entry name" value="Bifunctional protein FolD"/>
    <property type="match status" value="1"/>
</dbReference>
<dbReference type="FunFam" id="3.40.50.720:FF:000006">
    <property type="entry name" value="Bifunctional protein FolD"/>
    <property type="match status" value="1"/>
</dbReference>
<dbReference type="Gene3D" id="3.40.50.10860">
    <property type="entry name" value="Leucine Dehydrogenase, chain A, domain 1"/>
    <property type="match status" value="1"/>
</dbReference>
<dbReference type="Gene3D" id="3.40.50.720">
    <property type="entry name" value="NAD(P)-binding Rossmann-like Domain"/>
    <property type="match status" value="1"/>
</dbReference>
<dbReference type="HAMAP" id="MF_01576">
    <property type="entry name" value="THF_DHG_CYH"/>
    <property type="match status" value="1"/>
</dbReference>
<dbReference type="InterPro" id="IPR046346">
    <property type="entry name" value="Aminoacid_DH-like_N_sf"/>
</dbReference>
<dbReference type="InterPro" id="IPR036291">
    <property type="entry name" value="NAD(P)-bd_dom_sf"/>
</dbReference>
<dbReference type="InterPro" id="IPR000672">
    <property type="entry name" value="THF_DH/CycHdrlase"/>
</dbReference>
<dbReference type="InterPro" id="IPR020630">
    <property type="entry name" value="THF_DH/CycHdrlase_cat_dom"/>
</dbReference>
<dbReference type="InterPro" id="IPR020867">
    <property type="entry name" value="THF_DH/CycHdrlase_CS"/>
</dbReference>
<dbReference type="InterPro" id="IPR020631">
    <property type="entry name" value="THF_DH/CycHdrlase_NAD-bd_dom"/>
</dbReference>
<dbReference type="NCBIfam" id="NF008058">
    <property type="entry name" value="PRK10792.1"/>
    <property type="match status" value="1"/>
</dbReference>
<dbReference type="NCBIfam" id="NF010783">
    <property type="entry name" value="PRK14186.1"/>
    <property type="match status" value="1"/>
</dbReference>
<dbReference type="PANTHER" id="PTHR48099:SF5">
    <property type="entry name" value="C-1-TETRAHYDROFOLATE SYNTHASE, CYTOPLASMIC"/>
    <property type="match status" value="1"/>
</dbReference>
<dbReference type="PANTHER" id="PTHR48099">
    <property type="entry name" value="C-1-TETRAHYDROFOLATE SYNTHASE, CYTOPLASMIC-RELATED"/>
    <property type="match status" value="1"/>
</dbReference>
<dbReference type="Pfam" id="PF00763">
    <property type="entry name" value="THF_DHG_CYH"/>
    <property type="match status" value="1"/>
</dbReference>
<dbReference type="Pfam" id="PF02882">
    <property type="entry name" value="THF_DHG_CYH_C"/>
    <property type="match status" value="1"/>
</dbReference>
<dbReference type="PRINTS" id="PR00085">
    <property type="entry name" value="THFDHDRGNASE"/>
</dbReference>
<dbReference type="SUPFAM" id="SSF53223">
    <property type="entry name" value="Aminoacid dehydrogenase-like, N-terminal domain"/>
    <property type="match status" value="1"/>
</dbReference>
<dbReference type="SUPFAM" id="SSF51735">
    <property type="entry name" value="NAD(P)-binding Rossmann-fold domains"/>
    <property type="match status" value="1"/>
</dbReference>
<dbReference type="PROSITE" id="PS00766">
    <property type="entry name" value="THF_DHG_CYH_1"/>
    <property type="match status" value="1"/>
</dbReference>
<dbReference type="PROSITE" id="PS00767">
    <property type="entry name" value="THF_DHG_CYH_2"/>
    <property type="match status" value="1"/>
</dbReference>
<keyword id="KW-0028">Amino-acid biosynthesis</keyword>
<keyword id="KW-0368">Histidine biosynthesis</keyword>
<keyword id="KW-0378">Hydrolase</keyword>
<keyword id="KW-0486">Methionine biosynthesis</keyword>
<keyword id="KW-0511">Multifunctional enzyme</keyword>
<keyword id="KW-0521">NADP</keyword>
<keyword id="KW-0554">One-carbon metabolism</keyword>
<keyword id="KW-0560">Oxidoreductase</keyword>
<keyword id="KW-0658">Purine biosynthesis</keyword>
<gene>
    <name evidence="1" type="primary">folD</name>
    <name type="ordered locus">HS_1221</name>
</gene>
<organism>
    <name type="scientific">Histophilus somni (strain 129Pt)</name>
    <name type="common">Haemophilus somnus</name>
    <dbReference type="NCBI Taxonomy" id="205914"/>
    <lineage>
        <taxon>Bacteria</taxon>
        <taxon>Pseudomonadati</taxon>
        <taxon>Pseudomonadota</taxon>
        <taxon>Gammaproteobacteria</taxon>
        <taxon>Pasteurellales</taxon>
        <taxon>Pasteurellaceae</taxon>
        <taxon>Histophilus</taxon>
    </lineage>
</organism>